<feature type="chain" id="PRO_0000209296" description="UPF0250 protein YbeD">
    <location>
        <begin position="1"/>
        <end position="87"/>
    </location>
</feature>
<feature type="strand" evidence="2">
    <location>
        <begin position="4"/>
        <end position="6"/>
    </location>
</feature>
<feature type="strand" evidence="2">
    <location>
        <begin position="15"/>
        <end position="22"/>
    </location>
</feature>
<feature type="helix" evidence="2">
    <location>
        <begin position="27"/>
        <end position="38"/>
    </location>
</feature>
<feature type="strand" evidence="2">
    <location>
        <begin position="39"/>
        <end position="41"/>
    </location>
</feature>
<feature type="strand" evidence="2">
    <location>
        <begin position="45"/>
        <end position="48"/>
    </location>
</feature>
<feature type="strand" evidence="2">
    <location>
        <begin position="53"/>
        <end position="62"/>
    </location>
</feature>
<feature type="helix" evidence="2">
    <location>
        <begin position="67"/>
        <end position="77"/>
    </location>
</feature>
<feature type="strand" evidence="2">
    <location>
        <begin position="80"/>
        <end position="82"/>
    </location>
</feature>
<feature type="strand" evidence="2">
    <location>
        <begin position="84"/>
        <end position="86"/>
    </location>
</feature>
<reference key="1">
    <citation type="journal article" date="1993" name="J. Bacteriol.">
        <title>Lipoic acid metabolism in Escherichia coli: sequencing and functional characterization of the lipA and lipB genes.</title>
        <authorList>
            <person name="Reed K.E."/>
            <person name="Cronan J.E. Jr."/>
        </authorList>
    </citation>
    <scope>NUCLEOTIDE SEQUENCE [GENOMIC DNA]</scope>
    <source>
        <strain>K12 / W3110 / ATCC 27325 / DSM 5911</strain>
    </source>
</reference>
<reference key="2">
    <citation type="journal article" date="1996" name="DNA Res.">
        <title>A 718-kb DNA sequence of the Escherichia coli K-12 genome corresponding to the 12.7-28.0 min region on the linkage map.</title>
        <authorList>
            <person name="Oshima T."/>
            <person name="Aiba H."/>
            <person name="Baba T."/>
            <person name="Fujita K."/>
            <person name="Hayashi K."/>
            <person name="Honjo A."/>
            <person name="Ikemoto K."/>
            <person name="Inada T."/>
            <person name="Itoh T."/>
            <person name="Kajihara M."/>
            <person name="Kanai K."/>
            <person name="Kashimoto K."/>
            <person name="Kimura S."/>
            <person name="Kitagawa M."/>
            <person name="Makino K."/>
            <person name="Masuda S."/>
            <person name="Miki T."/>
            <person name="Mizobuchi K."/>
            <person name="Mori H."/>
            <person name="Motomura K."/>
            <person name="Nakamura Y."/>
            <person name="Nashimoto H."/>
            <person name="Nishio Y."/>
            <person name="Saito N."/>
            <person name="Sampei G."/>
            <person name="Seki Y."/>
            <person name="Tagami H."/>
            <person name="Takemoto K."/>
            <person name="Wada C."/>
            <person name="Yamamoto Y."/>
            <person name="Yano M."/>
            <person name="Horiuchi T."/>
        </authorList>
    </citation>
    <scope>NUCLEOTIDE SEQUENCE [LARGE SCALE GENOMIC DNA]</scope>
    <source>
        <strain>K12 / W3110 / ATCC 27325 / DSM 5911</strain>
    </source>
</reference>
<reference key="3">
    <citation type="submission" date="1997-01" db="EMBL/GenBank/DDBJ databases">
        <title>Sequence of minutes 4-25 of Escherichia coli.</title>
        <authorList>
            <person name="Chung E."/>
            <person name="Allen E."/>
            <person name="Araujo R."/>
            <person name="Aparicio A.M."/>
            <person name="Davis K."/>
            <person name="Duncan M."/>
            <person name="Federspiel N."/>
            <person name="Hyman R."/>
            <person name="Kalman S."/>
            <person name="Komp C."/>
            <person name="Kurdi O."/>
            <person name="Lew H."/>
            <person name="Lin D."/>
            <person name="Namath A."/>
            <person name="Oefner P."/>
            <person name="Roberts D."/>
            <person name="Schramm S."/>
            <person name="Davis R.W."/>
        </authorList>
    </citation>
    <scope>NUCLEOTIDE SEQUENCE [LARGE SCALE GENOMIC DNA]</scope>
    <source>
        <strain>K12 / MG1655 / ATCC 47076</strain>
    </source>
</reference>
<reference key="4">
    <citation type="journal article" date="1997" name="Science">
        <title>The complete genome sequence of Escherichia coli K-12.</title>
        <authorList>
            <person name="Blattner F.R."/>
            <person name="Plunkett G. III"/>
            <person name="Bloch C.A."/>
            <person name="Perna N.T."/>
            <person name="Burland V."/>
            <person name="Riley M."/>
            <person name="Collado-Vides J."/>
            <person name="Glasner J.D."/>
            <person name="Rode C.K."/>
            <person name="Mayhew G.F."/>
            <person name="Gregor J."/>
            <person name="Davis N.W."/>
            <person name="Kirkpatrick H.A."/>
            <person name="Goeden M.A."/>
            <person name="Rose D.J."/>
            <person name="Mau B."/>
            <person name="Shao Y."/>
        </authorList>
    </citation>
    <scope>NUCLEOTIDE SEQUENCE [LARGE SCALE GENOMIC DNA]</scope>
    <source>
        <strain>K12 / MG1655 / ATCC 47076</strain>
    </source>
</reference>
<reference key="5">
    <citation type="journal article" date="2006" name="Mol. Syst. Biol.">
        <title>Highly accurate genome sequences of Escherichia coli K-12 strains MG1655 and W3110.</title>
        <authorList>
            <person name="Hayashi K."/>
            <person name="Morooka N."/>
            <person name="Yamamoto Y."/>
            <person name="Fujita K."/>
            <person name="Isono K."/>
            <person name="Choi S."/>
            <person name="Ohtsubo E."/>
            <person name="Baba T."/>
            <person name="Wanner B.L."/>
            <person name="Mori H."/>
            <person name="Horiuchi T."/>
        </authorList>
    </citation>
    <scope>NUCLEOTIDE SEQUENCE [LARGE SCALE GENOMIC DNA]</scope>
    <source>
        <strain>K12 / W3110 / ATCC 27325 / DSM 5911</strain>
    </source>
</reference>
<reference key="6">
    <citation type="journal article" date="2004" name="J. Bacteriol.">
        <title>Structural similarity of YbeD protein from Escherichia coli to allosteric regulatory domains.</title>
        <authorList>
            <person name="Kozlov G."/>
            <person name="Elias D."/>
            <person name="Semesi A."/>
            <person name="Yee A."/>
            <person name="Cygler M."/>
            <person name="Gehring K."/>
        </authorList>
    </citation>
    <scope>STRUCTURE BY NMR</scope>
</reference>
<evidence type="ECO:0000305" key="1"/>
<evidence type="ECO:0007829" key="2">
    <source>
        <dbReference type="PDB" id="1RWU"/>
    </source>
</evidence>
<dbReference type="EMBL" id="L07636">
    <property type="protein sequence ID" value="AAA66341.1"/>
    <property type="molecule type" value="Genomic_DNA"/>
</dbReference>
<dbReference type="EMBL" id="U82598">
    <property type="protein sequence ID" value="AAB40831.1"/>
    <property type="molecule type" value="Genomic_DNA"/>
</dbReference>
<dbReference type="EMBL" id="U00096">
    <property type="protein sequence ID" value="AAC73732.1"/>
    <property type="molecule type" value="Genomic_DNA"/>
</dbReference>
<dbReference type="EMBL" id="AP009048">
    <property type="protein sequence ID" value="BAA35274.1"/>
    <property type="molecule type" value="Genomic_DNA"/>
</dbReference>
<dbReference type="PIR" id="E64797">
    <property type="entry name" value="E64797"/>
</dbReference>
<dbReference type="RefSeq" id="NP_415164.1">
    <property type="nucleotide sequence ID" value="NC_000913.3"/>
</dbReference>
<dbReference type="RefSeq" id="WP_000850550.1">
    <property type="nucleotide sequence ID" value="NZ_STEB01000031.1"/>
</dbReference>
<dbReference type="PDB" id="1RWU">
    <property type="method" value="NMR"/>
    <property type="chains" value="A=1-87"/>
</dbReference>
<dbReference type="PDBsum" id="1RWU"/>
<dbReference type="SMR" id="P0A8J4"/>
<dbReference type="BioGRID" id="4260679">
    <property type="interactions" value="242"/>
</dbReference>
<dbReference type="DIP" id="DIP-31839N"/>
<dbReference type="FunCoup" id="P0A8J4">
    <property type="interactions" value="249"/>
</dbReference>
<dbReference type="IntAct" id="P0A8J4">
    <property type="interactions" value="10"/>
</dbReference>
<dbReference type="STRING" id="511145.b0631"/>
<dbReference type="jPOST" id="P0A8J4"/>
<dbReference type="PaxDb" id="511145-b0631"/>
<dbReference type="DNASU" id="945220"/>
<dbReference type="EnsemblBacteria" id="AAC73732">
    <property type="protein sequence ID" value="AAC73732"/>
    <property type="gene ID" value="b0631"/>
</dbReference>
<dbReference type="GeneID" id="93776851"/>
<dbReference type="GeneID" id="945220"/>
<dbReference type="KEGG" id="ecj:JW0626"/>
<dbReference type="KEGG" id="eco:b0631"/>
<dbReference type="KEGG" id="ecoc:C3026_03155"/>
<dbReference type="PATRIC" id="fig|511145.12.peg.661"/>
<dbReference type="EchoBASE" id="EB1550"/>
<dbReference type="eggNOG" id="COG2921">
    <property type="taxonomic scope" value="Bacteria"/>
</dbReference>
<dbReference type="HOGENOM" id="CLU_161438_2_1_6"/>
<dbReference type="InParanoid" id="P0A8J4"/>
<dbReference type="OMA" id="MNTKFDE"/>
<dbReference type="OrthoDB" id="9793424at2"/>
<dbReference type="PhylomeDB" id="P0A8J4"/>
<dbReference type="BioCyc" id="EcoCyc:EG11592-MONOMER"/>
<dbReference type="EvolutionaryTrace" id="P0A8J4"/>
<dbReference type="PRO" id="PR:P0A8J4"/>
<dbReference type="Proteomes" id="UP000000625">
    <property type="component" value="Chromosome"/>
</dbReference>
<dbReference type="GO" id="GO:0005829">
    <property type="term" value="C:cytosol"/>
    <property type="evidence" value="ECO:0000314"/>
    <property type="project" value="EcoCyc"/>
</dbReference>
<dbReference type="GO" id="GO:0034605">
    <property type="term" value="P:cellular response to heat"/>
    <property type="evidence" value="ECO:0000315"/>
    <property type="project" value="EcoCyc"/>
</dbReference>
<dbReference type="FunFam" id="3.30.70.260:FF:000002">
    <property type="entry name" value="UPF0250 protein YbeD"/>
    <property type="match status" value="1"/>
</dbReference>
<dbReference type="Gene3D" id="3.30.70.260">
    <property type="match status" value="1"/>
</dbReference>
<dbReference type="HAMAP" id="MF_00659">
    <property type="entry name" value="UPF0250"/>
    <property type="match status" value="1"/>
</dbReference>
<dbReference type="InterPro" id="IPR007454">
    <property type="entry name" value="UPF0250_YbeD-like"/>
</dbReference>
<dbReference type="InterPro" id="IPR027471">
    <property type="entry name" value="YbeD-like_sf"/>
</dbReference>
<dbReference type="NCBIfam" id="NF003447">
    <property type="entry name" value="PRK04998.1"/>
    <property type="match status" value="1"/>
</dbReference>
<dbReference type="PANTHER" id="PTHR38036">
    <property type="entry name" value="UPF0250 PROTEIN YBED"/>
    <property type="match status" value="1"/>
</dbReference>
<dbReference type="PANTHER" id="PTHR38036:SF1">
    <property type="entry name" value="UPF0250 PROTEIN YBED"/>
    <property type="match status" value="1"/>
</dbReference>
<dbReference type="Pfam" id="PF04359">
    <property type="entry name" value="DUF493"/>
    <property type="match status" value="1"/>
</dbReference>
<dbReference type="SUPFAM" id="SSF117991">
    <property type="entry name" value="YbeD/HP0495-like"/>
    <property type="match status" value="1"/>
</dbReference>
<name>YBED_ECOLI</name>
<keyword id="KW-0002">3D-structure</keyword>
<keyword id="KW-1185">Reference proteome</keyword>
<accession>P0A8J4</accession>
<accession>P30977</accession>
<comment type="interaction">
    <interactant intactId="EBI-370708">
        <id>P0A8J4</id>
    </interactant>
    <interactant intactId="EBI-301077">
        <id>P0CE47</id>
        <label>tufA</label>
    </interactant>
    <organismsDiffer>false</organismsDiffer>
    <experiments>3</experiments>
</comment>
<comment type="similarity">
    <text evidence="1">Belongs to the UPF0250 family.</text>
</comment>
<organism>
    <name type="scientific">Escherichia coli (strain K12)</name>
    <dbReference type="NCBI Taxonomy" id="83333"/>
    <lineage>
        <taxon>Bacteria</taxon>
        <taxon>Pseudomonadati</taxon>
        <taxon>Pseudomonadota</taxon>
        <taxon>Gammaproteobacteria</taxon>
        <taxon>Enterobacterales</taxon>
        <taxon>Enterobacteriaceae</taxon>
        <taxon>Escherichia</taxon>
    </lineage>
</organism>
<sequence length="87" mass="9827">MKTKLNELLEFPTPFTYKVMGQALPELVDQVVEVVQRHAPGDYTPTVKPSSKGNYHSVSITINATHIEQVETLYEELGKIDIVRMVL</sequence>
<proteinExistence type="evidence at protein level"/>
<protein>
    <recommendedName>
        <fullName>UPF0250 protein YbeD</fullName>
    </recommendedName>
</protein>
<gene>
    <name type="primary">ybeD</name>
    <name type="ordered locus">b0631</name>
    <name type="ordered locus">JW0626</name>
</gene>